<reference key="1">
    <citation type="journal article" date="2005" name="Nature">
        <title>The genome sequence of the rice blast fungus Magnaporthe grisea.</title>
        <authorList>
            <person name="Dean R.A."/>
            <person name="Talbot N.J."/>
            <person name="Ebbole D.J."/>
            <person name="Farman M.L."/>
            <person name="Mitchell T.K."/>
            <person name="Orbach M.J."/>
            <person name="Thon M.R."/>
            <person name="Kulkarni R."/>
            <person name="Xu J.-R."/>
            <person name="Pan H."/>
            <person name="Read N.D."/>
            <person name="Lee Y.-H."/>
            <person name="Carbone I."/>
            <person name="Brown D."/>
            <person name="Oh Y.Y."/>
            <person name="Donofrio N."/>
            <person name="Jeong J.S."/>
            <person name="Soanes D.M."/>
            <person name="Djonovic S."/>
            <person name="Kolomiets E."/>
            <person name="Rehmeyer C."/>
            <person name="Li W."/>
            <person name="Harding M."/>
            <person name="Kim S."/>
            <person name="Lebrun M.-H."/>
            <person name="Bohnert H."/>
            <person name="Coughlan S."/>
            <person name="Butler J."/>
            <person name="Calvo S.E."/>
            <person name="Ma L.-J."/>
            <person name="Nicol R."/>
            <person name="Purcell S."/>
            <person name="Nusbaum C."/>
            <person name="Galagan J.E."/>
            <person name="Birren B.W."/>
        </authorList>
    </citation>
    <scope>NUCLEOTIDE SEQUENCE [LARGE SCALE GENOMIC DNA]</scope>
    <source>
        <strain>70-15 / ATCC MYA-4617 / FGSC 8958</strain>
    </source>
</reference>
<reference key="2">
    <citation type="journal article" date="2014" name="Fungal Genet. Biol.">
        <title>Comparative functional analysis of the velvet gene family reveals unique roles in fungal development and pathogenicity in Magnaporthe oryzae.</title>
        <authorList>
            <person name="Kim H.J."/>
            <person name="Han J.H."/>
            <person name="Kim K.S."/>
            <person name="Lee Y.H."/>
        </authorList>
    </citation>
    <scope>FUNCTION</scope>
</reference>
<organism>
    <name type="scientific">Pyricularia oryzae (strain 70-15 / ATCC MYA-4617 / FGSC 8958)</name>
    <name type="common">Rice blast fungus</name>
    <name type="synonym">Magnaporthe oryzae</name>
    <dbReference type="NCBI Taxonomy" id="242507"/>
    <lineage>
        <taxon>Eukaryota</taxon>
        <taxon>Fungi</taxon>
        <taxon>Dikarya</taxon>
        <taxon>Ascomycota</taxon>
        <taxon>Pezizomycotina</taxon>
        <taxon>Sordariomycetes</taxon>
        <taxon>Sordariomycetidae</taxon>
        <taxon>Magnaporthales</taxon>
        <taxon>Pyriculariaceae</taxon>
        <taxon>Pyricularia</taxon>
    </lineage>
</organism>
<comment type="function">
    <text evidence="2 5">Component of the VELB-VOSA heterodimeric complex that plays a dual role in activating genes associated with spore maturation and repressing certain development-associated genes (By similarity). The complex binds DNA through the DNA-binding domain of VOSA that recognizes an 11-nucleotide consensus sequence 5'-CTGGCCGCGGC-3' consisting of two motifs in the promoters of key developmental regulatory genes (By similarity). Appears dispensable for the development and pathogenicity (PubMed:24632440).</text>
</comment>
<comment type="subunit">
    <text evidence="2">Forms a heterodimeric complex with VELB; the formation of the VELB-VOSA complex is light-dependent (By similarity).</text>
</comment>
<comment type="subcellular location">
    <subcellularLocation>
        <location evidence="2">Nucleus</location>
    </subcellularLocation>
</comment>
<comment type="domain">
    <text evidence="2">The N-terminal velvet domain contains a NF-kappa-B-like fold and is involved in DNA-binding (By similarity).</text>
</comment>
<comment type="similarity">
    <text evidence="7">Belongs to the velvet family. VosA subfamily.</text>
</comment>
<feature type="chain" id="PRO_0000435916" description="Spore development regulator VOSA">
    <location>
        <begin position="1"/>
        <end position="501"/>
    </location>
</feature>
<feature type="domain" description="Velvet" evidence="3">
    <location>
        <begin position="52"/>
        <end position="223"/>
    </location>
</feature>
<feature type="region of interest" description="Disordered" evidence="4">
    <location>
        <begin position="26"/>
        <end position="55"/>
    </location>
</feature>
<feature type="region of interest" description="Disordered" evidence="4">
    <location>
        <begin position="67"/>
        <end position="88"/>
    </location>
</feature>
<feature type="region of interest" description="Disordered" evidence="4">
    <location>
        <begin position="228"/>
        <end position="274"/>
    </location>
</feature>
<feature type="region of interest" description="Disordered" evidence="4">
    <location>
        <begin position="378"/>
        <end position="455"/>
    </location>
</feature>
<feature type="region of interest" description="Disordered" evidence="4">
    <location>
        <begin position="474"/>
        <end position="501"/>
    </location>
</feature>
<feature type="short sequence motif" description="Nuclear localization signal" evidence="1">
    <location>
        <begin position="364"/>
        <end position="371"/>
    </location>
</feature>
<feature type="compositionally biased region" description="Polar residues" evidence="4">
    <location>
        <begin position="35"/>
        <end position="50"/>
    </location>
</feature>
<feature type="compositionally biased region" description="Basic and acidic residues" evidence="4">
    <location>
        <begin position="67"/>
        <end position="85"/>
    </location>
</feature>
<feature type="compositionally biased region" description="Basic and acidic residues" evidence="4">
    <location>
        <begin position="237"/>
        <end position="252"/>
    </location>
</feature>
<feature type="compositionally biased region" description="Polar residues" evidence="4">
    <location>
        <begin position="253"/>
        <end position="271"/>
    </location>
</feature>
<sequence>MSLPSIGSVGSDRMAAYMHGQQVYTGQFGDPNLTPPQAETQMSAQASAQAVGQEPEPDYKLVIRQEPQRARVAQGKEKGTDRKPIDPPPIVQLIRTARSDPAQIYLQSPYYFMACTLIKGSDDDPDPNPNSMLGTLVSSLHKLRDLNNEDGGFFIFGDLSIKIEGVFRLQFTLFQMKDSTCVFLDSATSQPFTVYPQKNFEGMAESTFLTRSFSDQGVRLRVRKDSRAMTTRKRNHQHAEVAKKHSEWDRKQTSAVSRHSSINENDSTPTDTRGLASFAGAGSSGYYDQHRSHYGETYGHDTYYGGARSVKRARHEVSPGQYALPDLPQQAYATRQPSFSDSVASMTMPPVTTAAPSLAGINPMSSHHGYTGSAHPGFAPHRINTQVGGSHLAPQPHSAIGSVNQGYQSPSTHHQPHPHTAHPAGGQAYPSPSPRQSPGTAPNYHYGSHHSQQTPVSLGLETYTSAGVVGMPGPGQLVGTSAPSPHLGQGYRHGMINEPGA</sequence>
<evidence type="ECO:0000250" key="1">
    <source>
        <dbReference type="UniProtKB" id="M2TGT8"/>
    </source>
</evidence>
<evidence type="ECO:0000250" key="2">
    <source>
        <dbReference type="UniProtKB" id="Q5BBX1"/>
    </source>
</evidence>
<evidence type="ECO:0000255" key="3">
    <source>
        <dbReference type="PROSITE-ProRule" id="PRU01165"/>
    </source>
</evidence>
<evidence type="ECO:0000256" key="4">
    <source>
        <dbReference type="SAM" id="MobiDB-lite"/>
    </source>
</evidence>
<evidence type="ECO:0000269" key="5">
    <source>
    </source>
</evidence>
<evidence type="ECO:0000303" key="6">
    <source>
    </source>
</evidence>
<evidence type="ECO:0000305" key="7"/>
<name>VOSA_PYRO7</name>
<gene>
    <name evidence="6" type="primary">VOSA</name>
    <name type="ORF">MGG_00617</name>
</gene>
<accession>G4NB64</accession>
<protein>
    <recommendedName>
        <fullName evidence="7">Spore development regulator VOSA</fullName>
    </recommendedName>
</protein>
<dbReference type="EMBL" id="CM001235">
    <property type="protein sequence ID" value="EHA48826.1"/>
    <property type="molecule type" value="Genomic_DNA"/>
</dbReference>
<dbReference type="RefSeq" id="XP_003718410.1">
    <property type="nucleotide sequence ID" value="XM_003718362.1"/>
</dbReference>
<dbReference type="SMR" id="G4NB64"/>
<dbReference type="STRING" id="242507.G4NB64"/>
<dbReference type="EnsemblFungi" id="MGG_00617T0">
    <property type="protein sequence ID" value="MGG_00617T0"/>
    <property type="gene ID" value="MGG_00617"/>
</dbReference>
<dbReference type="GeneID" id="2674880"/>
<dbReference type="KEGG" id="mgr:MGG_00617"/>
<dbReference type="VEuPathDB" id="FungiDB:MGG_00617"/>
<dbReference type="eggNOG" id="ENOG502RYQD">
    <property type="taxonomic scope" value="Eukaryota"/>
</dbReference>
<dbReference type="HOGENOM" id="CLU_544081_0_0_1"/>
<dbReference type="InParanoid" id="G4NB64"/>
<dbReference type="OMA" id="NHFVTHR"/>
<dbReference type="OrthoDB" id="3056235at2759"/>
<dbReference type="PHI-base" id="PHI:4110"/>
<dbReference type="Proteomes" id="UP000009058">
    <property type="component" value="Chromosome 5"/>
</dbReference>
<dbReference type="GO" id="GO:0005634">
    <property type="term" value="C:nucleus"/>
    <property type="evidence" value="ECO:0007669"/>
    <property type="project" value="UniProtKB-SubCell"/>
</dbReference>
<dbReference type="GO" id="GO:0030435">
    <property type="term" value="P:sporulation resulting in formation of a cellular spore"/>
    <property type="evidence" value="ECO:0007669"/>
    <property type="project" value="UniProtKB-KW"/>
</dbReference>
<dbReference type="Gene3D" id="2.60.40.3960">
    <property type="entry name" value="Velvet domain"/>
    <property type="match status" value="1"/>
</dbReference>
<dbReference type="InterPro" id="IPR021740">
    <property type="entry name" value="Velvet"/>
</dbReference>
<dbReference type="InterPro" id="IPR037525">
    <property type="entry name" value="Velvet_dom"/>
</dbReference>
<dbReference type="InterPro" id="IPR038491">
    <property type="entry name" value="Velvet_dom_sf"/>
</dbReference>
<dbReference type="PANTHER" id="PTHR33572">
    <property type="entry name" value="SPORE DEVELOPMENT REGULATOR VOSA"/>
    <property type="match status" value="1"/>
</dbReference>
<dbReference type="PANTHER" id="PTHR33572:SF18">
    <property type="entry name" value="SPORE DEVELOPMENT REGULATOR VOSA"/>
    <property type="match status" value="1"/>
</dbReference>
<dbReference type="Pfam" id="PF11754">
    <property type="entry name" value="Velvet"/>
    <property type="match status" value="2"/>
</dbReference>
<dbReference type="PROSITE" id="PS51821">
    <property type="entry name" value="VELVET"/>
    <property type="match status" value="1"/>
</dbReference>
<proteinExistence type="inferred from homology"/>
<keyword id="KW-0539">Nucleus</keyword>
<keyword id="KW-1185">Reference proteome</keyword>
<keyword id="KW-0749">Sporulation</keyword>
<keyword id="KW-0804">Transcription</keyword>
<keyword id="KW-0805">Transcription regulation</keyword>